<gene>
    <name type="primary">PINA</name>
</gene>
<protein>
    <recommendedName>
        <fullName>Puroindoline-A</fullName>
    </recommendedName>
</protein>
<dbReference type="EMBL" id="X69913">
    <property type="protein sequence ID" value="CAA49538.1"/>
    <property type="molecule type" value="mRNA"/>
</dbReference>
<dbReference type="EMBL" id="X69914">
    <property type="protein sequence ID" value="CAA49539.1"/>
    <property type="molecule type" value="mRNA"/>
</dbReference>
<dbReference type="EMBL" id="AJ302091">
    <property type="protein sequence ID" value="CAC33790.1"/>
    <property type="molecule type" value="Genomic_DNA"/>
</dbReference>
<dbReference type="EMBL" id="DQ363911">
    <property type="protein sequence ID" value="ABD72477.1"/>
    <property type="molecule type" value="Genomic_DNA"/>
</dbReference>
<dbReference type="EMBL" id="DQ363912">
    <property type="protein sequence ID" value="ABD72478.1"/>
    <property type="molecule type" value="Genomic_DNA"/>
</dbReference>
<dbReference type="EMBL" id="AB177392">
    <property type="protein sequence ID" value="BAD21121.1"/>
    <property type="status" value="ALT_FRAME"/>
    <property type="molecule type" value="Genomic_DNA"/>
</dbReference>
<dbReference type="EMBL" id="AB181238">
    <property type="protein sequence ID" value="BAD22739.1"/>
    <property type="molecule type" value="Genomic_DNA"/>
</dbReference>
<dbReference type="EMBL" id="AY599893">
    <property type="protein sequence ID" value="AAT40243.1"/>
    <property type="status" value="ALT_FRAME"/>
    <property type="molecule type" value="Genomic_DNA"/>
</dbReference>
<dbReference type="EMBL" id="CR626934">
    <property type="protein sequence ID" value="CAH10197.1"/>
    <property type="molecule type" value="Genomic_DNA"/>
</dbReference>
<dbReference type="EMBL" id="CT009735">
    <property type="protein sequence ID" value="CAJ15418.1"/>
    <property type="molecule type" value="Genomic_DNA"/>
</dbReference>
<dbReference type="PIR" id="S46515">
    <property type="entry name" value="S46515"/>
</dbReference>
<dbReference type="STRING" id="4565.P33432"/>
<dbReference type="TCDB" id="1.C.66.1.1">
    <property type="family name" value="the puroindoline (puroindoline) family"/>
</dbReference>
<dbReference type="PaxDb" id="4565-Traes_5DS_DB8524A64.1"/>
<dbReference type="EnsemblPlants" id="TraesARI5D03G02978550.1">
    <property type="protein sequence ID" value="TraesARI5D03G02978550.1.CDS1"/>
    <property type="gene ID" value="TraesARI5D03G02978550"/>
</dbReference>
<dbReference type="EnsemblPlants" id="TraesCAD_scaffold_013709_01G000600.1">
    <property type="protein sequence ID" value="TraesCAD_scaffold_013709_01G000600.1"/>
    <property type="gene ID" value="TraesCAD_scaffold_013709_01G000600"/>
</dbReference>
<dbReference type="EnsemblPlants" id="TraesCLE_scaffold_000763_01G000800.1">
    <property type="protein sequence ID" value="TraesCLE_scaffold_000763_01G000800.1"/>
    <property type="gene ID" value="TraesCLE_scaffold_000763_01G000800"/>
</dbReference>
<dbReference type="EnsemblPlants" id="TraesCS5D02G004100.1">
    <property type="protein sequence ID" value="TraesCS5D02G004100.1.cds1"/>
    <property type="gene ID" value="TraesCS5D02G004100"/>
</dbReference>
<dbReference type="EnsemblPlants" id="TraesCS5D03G0008300.1">
    <property type="protein sequence ID" value="TraesCS5D03G0008300.1.CDS1"/>
    <property type="gene ID" value="TraesCS5D03G0008300"/>
</dbReference>
<dbReference type="EnsemblPlants" id="TraesJUL5D03G03051130.1">
    <property type="protein sequence ID" value="TraesJUL5D03G03051130.1.CDS1"/>
    <property type="gene ID" value="TraesJUL5D03G03051130"/>
</dbReference>
<dbReference type="EnsemblPlants" id="TraesKAR5D01G0002550.1">
    <property type="protein sequence ID" value="cds.TraesKAR5D01G0002550.1"/>
    <property type="gene ID" value="TraesKAR5D01G0002550"/>
</dbReference>
<dbReference type="EnsemblPlants" id="TraesLAC5D03G02982820.1">
    <property type="protein sequence ID" value="TraesLAC5D03G02982820.1.CDS1"/>
    <property type="gene ID" value="TraesLAC5D03G02982820"/>
</dbReference>
<dbReference type="EnsemblPlants" id="TraesMAC5D03G03024680.1">
    <property type="protein sequence ID" value="TraesMAC5D03G03024680.1.CDS1"/>
    <property type="gene ID" value="TraesMAC5D03G03024680"/>
</dbReference>
<dbReference type="EnsemblPlants" id="TraesNOR5D03G03061340.1">
    <property type="protein sequence ID" value="TraesNOR5D03G03061340.1.CDS1"/>
    <property type="gene ID" value="TraesNOR5D03G03061340"/>
</dbReference>
<dbReference type="EnsemblPlants" id="TraesPARA_EIv1.0_1762150.1">
    <property type="protein sequence ID" value="TraesPARA_EIv1.0_1762150.1.CDS1"/>
    <property type="gene ID" value="TraesPARA_EIv1.0_1762150"/>
</dbReference>
<dbReference type="EnsemblPlants" id="TraesRN5D0100009100.1">
    <property type="protein sequence ID" value="TraesRN5D0100009100.1"/>
    <property type="gene ID" value="TraesRN5D0100009100"/>
</dbReference>
<dbReference type="EnsemblPlants" id="TraesROB_scaffold_024256_01G000400.1">
    <property type="protein sequence ID" value="TraesROB_scaffold_024256_01G000400.1"/>
    <property type="gene ID" value="TraesROB_scaffold_024256_01G000400"/>
</dbReference>
<dbReference type="EnsemblPlants" id="TraesSTA5D03G03017330.1">
    <property type="protein sequence ID" value="TraesSTA5D03G03017330.1.CDS1"/>
    <property type="gene ID" value="TraesSTA5D03G03017330"/>
</dbReference>
<dbReference type="EnsemblPlants" id="TraesSYM5D03G02965910.1">
    <property type="protein sequence ID" value="TraesSYM5D03G02965910.1.CDS1"/>
    <property type="gene ID" value="TraesSYM5D03G02965910"/>
</dbReference>
<dbReference type="Gramene" id="TraesARI5D03G02978550.1">
    <property type="protein sequence ID" value="TraesARI5D03G02978550.1.CDS1"/>
    <property type="gene ID" value="TraesARI5D03G02978550"/>
</dbReference>
<dbReference type="Gramene" id="TraesCAD_scaffold_013709_01G000600.1">
    <property type="protein sequence ID" value="TraesCAD_scaffold_013709_01G000600.1"/>
    <property type="gene ID" value="TraesCAD_scaffold_013709_01G000600"/>
</dbReference>
<dbReference type="Gramene" id="TraesCLE_scaffold_000763_01G000800.1">
    <property type="protein sequence ID" value="TraesCLE_scaffold_000763_01G000800.1"/>
    <property type="gene ID" value="TraesCLE_scaffold_000763_01G000800"/>
</dbReference>
<dbReference type="Gramene" id="TraesCS5D02G004100.1">
    <property type="protein sequence ID" value="TraesCS5D02G004100.1.cds1"/>
    <property type="gene ID" value="TraesCS5D02G004100"/>
</dbReference>
<dbReference type="Gramene" id="TraesCS5D03G0008300.1">
    <property type="protein sequence ID" value="TraesCS5D03G0008300.1.CDS1"/>
    <property type="gene ID" value="TraesCS5D03G0008300"/>
</dbReference>
<dbReference type="Gramene" id="TraesJUL5D03G03051130.1">
    <property type="protein sequence ID" value="TraesJUL5D03G03051130.1.CDS1"/>
    <property type="gene ID" value="TraesJUL5D03G03051130"/>
</dbReference>
<dbReference type="Gramene" id="TraesKAR5D01G0002550.1">
    <property type="protein sequence ID" value="cds.TraesKAR5D01G0002550.1"/>
    <property type="gene ID" value="TraesKAR5D01G0002550"/>
</dbReference>
<dbReference type="Gramene" id="TraesLAC5D03G02982820.1">
    <property type="protein sequence ID" value="TraesLAC5D03G02982820.1.CDS1"/>
    <property type="gene ID" value="TraesLAC5D03G02982820"/>
</dbReference>
<dbReference type="Gramene" id="TraesMAC5D03G03024680.1">
    <property type="protein sequence ID" value="TraesMAC5D03G03024680.1.CDS1"/>
    <property type="gene ID" value="TraesMAC5D03G03024680"/>
</dbReference>
<dbReference type="Gramene" id="TraesNOR5D03G03061340.1">
    <property type="protein sequence ID" value="TraesNOR5D03G03061340.1.CDS1"/>
    <property type="gene ID" value="TraesNOR5D03G03061340"/>
</dbReference>
<dbReference type="Gramene" id="TraesPARA_EIv1.0_1762150.1">
    <property type="protein sequence ID" value="TraesPARA_EIv1.0_1762150.1.CDS1"/>
    <property type="gene ID" value="TraesPARA_EIv1.0_1762150"/>
</dbReference>
<dbReference type="Gramene" id="TraesRN5D0100009100.1">
    <property type="protein sequence ID" value="TraesRN5D0100009100.1"/>
    <property type="gene ID" value="TraesRN5D0100009100"/>
</dbReference>
<dbReference type="Gramene" id="TraesROB_scaffold_024256_01G000400.1">
    <property type="protein sequence ID" value="TraesROB_scaffold_024256_01G000400.1"/>
    <property type="gene ID" value="TraesROB_scaffold_024256_01G000400"/>
</dbReference>
<dbReference type="Gramene" id="TraesSTA5D03G03017330.1">
    <property type="protein sequence ID" value="TraesSTA5D03G03017330.1.CDS1"/>
    <property type="gene ID" value="TraesSTA5D03G03017330"/>
</dbReference>
<dbReference type="Gramene" id="TraesSYM5D03G02965910.1">
    <property type="protein sequence ID" value="TraesSYM5D03G02965910.1.CDS1"/>
    <property type="gene ID" value="TraesSYM5D03G02965910"/>
</dbReference>
<dbReference type="HOGENOM" id="CLU_1621987_0_0_1"/>
<dbReference type="OMA" id="ACNIPST"/>
<dbReference type="OrthoDB" id="675647at2759"/>
<dbReference type="Proteomes" id="UP000019116">
    <property type="component" value="Chromosome 5D"/>
</dbReference>
<dbReference type="ExpressionAtlas" id="P33432">
    <property type="expression patterns" value="baseline"/>
</dbReference>
<dbReference type="GO" id="GO:0005576">
    <property type="term" value="C:extracellular region"/>
    <property type="evidence" value="ECO:0007669"/>
    <property type="project" value="UniProtKB-SubCell"/>
</dbReference>
<dbReference type="GO" id="GO:0016020">
    <property type="term" value="C:membrane"/>
    <property type="evidence" value="ECO:0007669"/>
    <property type="project" value="UniProtKB-SubCell"/>
</dbReference>
<dbReference type="GO" id="GO:0045735">
    <property type="term" value="F:nutrient reservoir activity"/>
    <property type="evidence" value="ECO:0007669"/>
    <property type="project" value="InterPro"/>
</dbReference>
<dbReference type="GO" id="GO:0090729">
    <property type="term" value="F:toxin activity"/>
    <property type="evidence" value="ECO:0007669"/>
    <property type="project" value="UniProtKB-KW"/>
</dbReference>
<dbReference type="GO" id="GO:0042742">
    <property type="term" value="P:defense response to bacterium"/>
    <property type="evidence" value="ECO:0007669"/>
    <property type="project" value="UniProtKB-KW"/>
</dbReference>
<dbReference type="CDD" id="cd00261">
    <property type="entry name" value="AAI_SS"/>
    <property type="match status" value="1"/>
</dbReference>
<dbReference type="Gene3D" id="1.10.110.10">
    <property type="entry name" value="Plant lipid-transfer and hydrophobic proteins"/>
    <property type="match status" value="1"/>
</dbReference>
<dbReference type="InterPro" id="IPR036312">
    <property type="entry name" value="Bifun_inhib/LTP/seed_sf"/>
</dbReference>
<dbReference type="InterPro" id="IPR016140">
    <property type="entry name" value="Bifunc_inhib/LTP/seed_store"/>
</dbReference>
<dbReference type="InterPro" id="IPR001954">
    <property type="entry name" value="Glia_glutenin"/>
</dbReference>
<dbReference type="PANTHER" id="PTHR33454">
    <property type="entry name" value="PROLAMIN PPROL 14P"/>
    <property type="match status" value="1"/>
</dbReference>
<dbReference type="PANTHER" id="PTHR33454:SF5">
    <property type="entry name" value="PUROINDOLINE-A"/>
    <property type="match status" value="1"/>
</dbReference>
<dbReference type="Pfam" id="PF00234">
    <property type="entry name" value="Tryp_alpha_amyl"/>
    <property type="match status" value="1"/>
</dbReference>
<dbReference type="SMART" id="SM00499">
    <property type="entry name" value="AAI"/>
    <property type="match status" value="1"/>
</dbReference>
<dbReference type="SUPFAM" id="SSF47699">
    <property type="entry name" value="Bifunctional inhibitor/lipid-transfer protein/seed storage 2S albumin"/>
    <property type="match status" value="1"/>
</dbReference>
<keyword id="KW-0044">Antibiotic</keyword>
<keyword id="KW-0929">Antimicrobial</keyword>
<keyword id="KW-0903">Direct protein sequencing</keyword>
<keyword id="KW-1015">Disulfide bond</keyword>
<keyword id="KW-0472">Membrane</keyword>
<keyword id="KW-0611">Plant defense</keyword>
<keyword id="KW-1185">Reference proteome</keyword>
<keyword id="KW-0964">Secreted</keyword>
<keyword id="KW-0732">Signal</keyword>
<keyword id="KW-0800">Toxin</keyword>
<feature type="signal peptide" evidence="1">
    <location>
        <begin position="1"/>
        <end position="19"/>
    </location>
</feature>
<feature type="propeptide" id="PRO_0000032285" evidence="6">
    <location>
        <begin position="20"/>
        <end position="28"/>
    </location>
</feature>
<feature type="chain" id="PRO_0000032286" description="Puroindoline-A">
    <location>
        <begin position="29"/>
        <end position="146"/>
    </location>
</feature>
<feature type="propeptide" id="PRO_0000032287" description="Removed in mature form">
    <location>
        <begin position="147"/>
        <end position="148"/>
    </location>
</feature>
<feature type="sequence variant" description="In a few molecules." evidence="6">
    <location>
        <position position="29"/>
    </location>
</feature>
<feature type="sequence variant" description="In about 50% of the molecules." evidence="6">
    <location>
        <begin position="144"/>
        <end position="146"/>
    </location>
</feature>
<feature type="sequence variant" description="In almost all molecules." evidence="6">
    <location>
        <position position="146"/>
    </location>
</feature>
<feature type="sequence conflict" description="In Ref. 4; BAD21121/AAT40243." evidence="8" ref="4">
    <original>V</original>
    <variation>E</variation>
    <location>
        <position position="13"/>
    </location>
</feature>
<feature type="sequence conflict" description="In Ref. 4; BAD22739." evidence="8" ref="4">
    <original>NI</original>
    <variation>KL</variation>
    <location>
        <begin position="139"/>
        <end position="140"/>
    </location>
</feature>
<comment type="function">
    <text evidence="2 3 4">Acts as a membranotoxin, probably through its antibacterial and antifungal activities, contributing to the defense mechanism of the plant against predators. Forms monovalent cation-selective ion channels in membranes. Has antibacterial activity against the Gram-positive bacteria S.aureus and C.michiganensis, and the Gram-negative bacteria E.coli, P.syringae pv phaseoli, A.tumefaciens and E.carotovora subsp carotovora. Acts synergistically with PINB against bacteria. Contributes to grain texture and hardness.</text>
</comment>
<comment type="subcellular location">
    <subcellularLocation>
        <location evidence="3">Membrane</location>
    </subcellularLocation>
    <subcellularLocation>
        <location evidence="3">Secreted</location>
        <location evidence="3">Extracellular space</location>
    </subcellularLocation>
</comment>
<comment type="tissue specificity">
    <text evidence="3 5 7">Endosperm and aleurone layer of developing kernels. In the aleurone layer, mainly localized to starch granules and the surface of the plasma membrane, forming a uniform layer, also abundant in the intercellular space. In the endosperm, mainly localized to starch granules and the plasma membrane, but less abundant in the intercellular space. Not found in roots or coleoptiles.</text>
</comment>
<comment type="developmental stage">
    <text evidence="5">Starts to accumulate in seeds between 8 and 12 days after flowering. Levels increase markedly between 15 and 18 days after flowering, reaching a peak between 26 and 33 days after flowering. Levels then decline rapidly at none is detected at 40 days after flowering. Not detected in germinated seeds.</text>
</comment>
<comment type="PTM">
    <text>Five disulfide bonds are present.</text>
</comment>
<comment type="mass spectrometry">
    <text>In cv. Riband.</text>
</comment>
<comment type="mass spectrometry">
    <text>In cv. Hereward.</text>
</comment>
<comment type="mass spectrometry">
    <text>In cv. Soissons.</text>
</comment>
<comment type="polymorphism">
    <text>Variation in, or absence of, PINA is associated with variation in grain texture.</text>
</comment>
<comment type="sequence caution" evidence="8">
    <conflict type="frameshift">
        <sequence resource="EMBL-CDS" id="AAT40243"/>
    </conflict>
</comment>
<comment type="sequence caution" evidence="8">
    <conflict type="frameshift">
        <sequence resource="EMBL-CDS" id="BAD21121"/>
    </conflict>
</comment>
<organism>
    <name type="scientific">Triticum aestivum</name>
    <name type="common">Wheat</name>
    <dbReference type="NCBI Taxonomy" id="4565"/>
    <lineage>
        <taxon>Eukaryota</taxon>
        <taxon>Viridiplantae</taxon>
        <taxon>Streptophyta</taxon>
        <taxon>Embryophyta</taxon>
        <taxon>Tracheophyta</taxon>
        <taxon>Spermatophyta</taxon>
        <taxon>Magnoliopsida</taxon>
        <taxon>Liliopsida</taxon>
        <taxon>Poales</taxon>
        <taxon>Poaceae</taxon>
        <taxon>BOP clade</taxon>
        <taxon>Pooideae</taxon>
        <taxon>Triticodae</taxon>
        <taxon>Triticeae</taxon>
        <taxon>Triticinae</taxon>
        <taxon>Triticum</taxon>
    </lineage>
</organism>
<reference key="1">
    <citation type="journal article" date="1994" name="Plant Mol. Biol.">
        <title>Triticum aestivum puroindolines, two basic cystine-rich seed proteins: cDNA sequence analysis and developmental gene expression.</title>
        <authorList>
            <person name="Gautier M.-F."/>
            <person name="Aleman M.-F."/>
            <person name="Guirao A."/>
            <person name="Marion D."/>
            <person name="Joudrier P."/>
        </authorList>
    </citation>
    <scope>NUCLEOTIDE SEQUENCE [MRNA]</scope>
    <scope>TISSUE SPECIFICITY</scope>
    <scope>DEVELOPMENTAL STAGE</scope>
    <source>
        <strain>cv. Capitole</strain>
        <tissue>Seed</tissue>
    </source>
</reference>
<reference key="2">
    <citation type="journal article" date="2002" name="Euphytica">
        <title>Analysis of puroindoline a and b sequences from Triticum aestivum cv. 'Penawawa' and related dipoloid taxa.</title>
        <authorList>
            <person name="Lillemo M."/>
            <person name="Simeone M.C."/>
            <person name="Morris C.F."/>
        </authorList>
        <dbReference type="AGRICOLA" id="IND23303453"/>
    </citation>
    <scope>NUCLEOTIDE SEQUENCE [GENOMIC DNA]</scope>
    <scope>TISSUE SPECIFICITY</scope>
    <source>
        <strain>cv. Penawawa</strain>
        <tissue>Seed</tissue>
    </source>
</reference>
<reference key="3">
    <citation type="journal article" date="2006" name="J. Cereal Sci.">
        <title>Conserved regulatory elements identified from a comparative puroindoline gene sequence survey of Triticum and Aegilops diploid taxa.</title>
        <authorList>
            <person name="Simeone M.C."/>
            <person name="Gedye K.R."/>
            <person name="Mason-Gamer R."/>
            <person name="Gill B.S."/>
            <person name="Morris C.F."/>
        </authorList>
        <dbReference type="AGRICOLA" id="IND43829610"/>
    </citation>
    <scope>NUCLEOTIDE SEQUENCE [GENOMIC DNA]</scope>
    <source>
        <strain>cv. Cheyenne</strain>
        <strain>cv. Chinese Spring</strain>
        <tissue>Seed</tissue>
    </source>
</reference>
<reference key="4">
    <citation type="submission" date="2004-04" db="EMBL/GenBank/DDBJ databases">
        <title>Some new allele variations of puroindolines gene in common wheat.</title>
        <authorList>
            <person name="Chang C."/>
            <person name="Li W."/>
            <person name="Li B."/>
            <person name="Liu G."/>
        </authorList>
    </citation>
    <scope>NUCLEOTIDE SEQUENCE [GENOMIC DNA]</scope>
    <source>
        <strain>cv. Jing 771</strain>
        <strain>cv. U29</strain>
        <tissue>Leaf</tissue>
    </source>
</reference>
<reference key="5">
    <citation type="submission" date="2005-06" db="EMBL/GenBank/DDBJ databases">
        <authorList>
            <consortium name="Genoscope"/>
        </authorList>
    </citation>
    <scope>NUCLEOTIDE SEQUENCE [GENOMIC DNA]</scope>
    <source>
        <strain>cv. Renan</strain>
    </source>
</reference>
<reference key="6">
    <citation type="journal article" date="1993" name="FEBS Lett.">
        <title>Complete amino acid sequence of puroindoline, a new basic and cystine-rich protein with a unique tryptophan-rich domain, isolated from wheat endosperm by Triton X-114 phase partitioning.</title>
        <authorList>
            <person name="Blochet J.-E."/>
            <person name="Chevalier C."/>
            <person name="Forest E."/>
            <person name="Pebay-Peyroula E."/>
            <person name="Gautier M.-F."/>
            <person name="Joudrier P."/>
            <person name="Pezolet M."/>
            <person name="Marion D."/>
        </authorList>
    </citation>
    <scope>PROTEIN SEQUENCE OF 29-146</scope>
    <scope>DISULFIDE BONDS</scope>
    <scope>VARIANTS ASP-29 DEL; 144-ILE--TYR-146 DEL AND TYR-146 DEL</scope>
    <source>
        <strain>cv. Camp Remy</strain>
        <tissue>Endosperm</tissue>
    </source>
</reference>
<reference key="7">
    <citation type="journal article" date="2003" name="Biophys. J.">
        <title>Puroindolines form ion channels in biological membranes.</title>
        <authorList>
            <person name="Charnet P."/>
            <person name="Molle G."/>
            <person name="Marion D."/>
            <person name="Rousset M."/>
            <person name="Lullien-Pellerin V."/>
        </authorList>
    </citation>
    <scope>FUNCTION</scope>
</reference>
<reference key="8">
    <citation type="journal article" date="2005" name="Plant Mol. Biol.">
        <title>Two plant puroindolines colocalize in wheat seed and in vitro synergistically fight against pathogens.</title>
        <authorList>
            <person name="Capparelli R."/>
            <person name="Amoroso M.G."/>
            <person name="Palumbo D."/>
            <person name="Iannaccone M."/>
            <person name="Faleri C."/>
            <person name="Cresti M."/>
        </authorList>
    </citation>
    <scope>FUNCTION</scope>
    <scope>SUBCELLULAR LOCATION</scope>
    <scope>TISSUE SPECIFICITY</scope>
</reference>
<reference key="9">
    <citation type="journal article" date="2006" name="FEBS J.">
        <title>Characterization of wheat puroindoline proteins.</title>
        <authorList>
            <person name="Day L."/>
            <person name="Bhandari D.G."/>
            <person name="Greenwell P."/>
            <person name="Leonard S.A."/>
            <person name="Schofield J.D."/>
        </authorList>
    </citation>
    <scope>FUNCTION</scope>
    <scope>MASS SPECTROMETRY</scope>
    <scope>POLYMORPHISM</scope>
</reference>
<proteinExistence type="evidence at protein level"/>
<sequence>MKALFLIGLLALVASTAFAQYSEVVGSYDVAGGGGAQQCPVETKLNSCRNYLLDRCSTMKDFPVTWRWWKWWKGGCQELLGECCSRLGQMPPQCRCNIIQGSIQGDLGGIFGFQRDRASKVIQEAKNLPPRCNQGPPCNIPGTIGYYW</sequence>
<name>PUIA_WHEAT</name>
<evidence type="ECO:0000255" key="1"/>
<evidence type="ECO:0000269" key="2">
    <source>
    </source>
</evidence>
<evidence type="ECO:0000269" key="3">
    <source>
    </source>
</evidence>
<evidence type="ECO:0000269" key="4">
    <source>
    </source>
</evidence>
<evidence type="ECO:0000269" key="5">
    <source>
    </source>
</evidence>
<evidence type="ECO:0000269" key="6">
    <source>
    </source>
</evidence>
<evidence type="ECO:0000269" key="7">
    <source ref="2"/>
</evidence>
<evidence type="ECO:0000305" key="8"/>
<accession>P33432</accession>
<accession>Q5BHS1</accession>
<accession>Q6J542</accession>
<accession>Q6L5P2</accession>